<feature type="chain" id="PRO_0000301370" description="Phosphoglucosamine mutase">
    <location>
        <begin position="1"/>
        <end position="450"/>
    </location>
</feature>
<feature type="active site" description="Phosphoserine intermediate" evidence="1">
    <location>
        <position position="101"/>
    </location>
</feature>
<feature type="binding site" description="via phosphate group" evidence="1">
    <location>
        <position position="101"/>
    </location>
    <ligand>
        <name>Mg(2+)</name>
        <dbReference type="ChEBI" id="CHEBI:18420"/>
    </ligand>
</feature>
<feature type="binding site" evidence="1">
    <location>
        <position position="242"/>
    </location>
    <ligand>
        <name>Mg(2+)</name>
        <dbReference type="ChEBI" id="CHEBI:18420"/>
    </ligand>
</feature>
<feature type="binding site" evidence="1">
    <location>
        <position position="244"/>
    </location>
    <ligand>
        <name>Mg(2+)</name>
        <dbReference type="ChEBI" id="CHEBI:18420"/>
    </ligand>
</feature>
<feature type="binding site" evidence="1">
    <location>
        <position position="246"/>
    </location>
    <ligand>
        <name>Mg(2+)</name>
        <dbReference type="ChEBI" id="CHEBI:18420"/>
    </ligand>
</feature>
<feature type="modified residue" description="Phosphoserine" evidence="1">
    <location>
        <position position="101"/>
    </location>
</feature>
<dbReference type="EC" id="5.4.2.10" evidence="1"/>
<dbReference type="EMBL" id="CP000283">
    <property type="protein sequence ID" value="ABE41135.1"/>
    <property type="molecule type" value="Genomic_DNA"/>
</dbReference>
<dbReference type="SMR" id="Q131V4"/>
<dbReference type="STRING" id="316057.RPD_3914"/>
<dbReference type="KEGG" id="rpd:RPD_3914"/>
<dbReference type="eggNOG" id="COG1109">
    <property type="taxonomic scope" value="Bacteria"/>
</dbReference>
<dbReference type="HOGENOM" id="CLU_016950_7_0_5"/>
<dbReference type="BioCyc" id="RPAL316057:RPD_RS19665-MONOMER"/>
<dbReference type="Proteomes" id="UP000001818">
    <property type="component" value="Chromosome"/>
</dbReference>
<dbReference type="GO" id="GO:0005829">
    <property type="term" value="C:cytosol"/>
    <property type="evidence" value="ECO:0007669"/>
    <property type="project" value="TreeGrafter"/>
</dbReference>
<dbReference type="GO" id="GO:0000287">
    <property type="term" value="F:magnesium ion binding"/>
    <property type="evidence" value="ECO:0007669"/>
    <property type="project" value="UniProtKB-UniRule"/>
</dbReference>
<dbReference type="GO" id="GO:0008966">
    <property type="term" value="F:phosphoglucosamine mutase activity"/>
    <property type="evidence" value="ECO:0007669"/>
    <property type="project" value="UniProtKB-UniRule"/>
</dbReference>
<dbReference type="GO" id="GO:0004615">
    <property type="term" value="F:phosphomannomutase activity"/>
    <property type="evidence" value="ECO:0007669"/>
    <property type="project" value="TreeGrafter"/>
</dbReference>
<dbReference type="GO" id="GO:0005975">
    <property type="term" value="P:carbohydrate metabolic process"/>
    <property type="evidence" value="ECO:0007669"/>
    <property type="project" value="InterPro"/>
</dbReference>
<dbReference type="GO" id="GO:0009252">
    <property type="term" value="P:peptidoglycan biosynthetic process"/>
    <property type="evidence" value="ECO:0007669"/>
    <property type="project" value="TreeGrafter"/>
</dbReference>
<dbReference type="GO" id="GO:0006048">
    <property type="term" value="P:UDP-N-acetylglucosamine biosynthetic process"/>
    <property type="evidence" value="ECO:0007669"/>
    <property type="project" value="TreeGrafter"/>
</dbReference>
<dbReference type="CDD" id="cd05802">
    <property type="entry name" value="GlmM"/>
    <property type="match status" value="1"/>
</dbReference>
<dbReference type="FunFam" id="3.30.310.50:FF:000001">
    <property type="entry name" value="Phosphoglucosamine mutase"/>
    <property type="match status" value="1"/>
</dbReference>
<dbReference type="FunFam" id="3.40.120.10:FF:000001">
    <property type="entry name" value="Phosphoglucosamine mutase"/>
    <property type="match status" value="1"/>
</dbReference>
<dbReference type="FunFam" id="3.40.120.10:FF:000003">
    <property type="entry name" value="Phosphoglucosamine mutase"/>
    <property type="match status" value="1"/>
</dbReference>
<dbReference type="Gene3D" id="3.40.120.10">
    <property type="entry name" value="Alpha-D-Glucose-1,6-Bisphosphate, subunit A, domain 3"/>
    <property type="match status" value="3"/>
</dbReference>
<dbReference type="Gene3D" id="3.30.310.50">
    <property type="entry name" value="Alpha-D-phosphohexomutase, C-terminal domain"/>
    <property type="match status" value="1"/>
</dbReference>
<dbReference type="HAMAP" id="MF_01554_B">
    <property type="entry name" value="GlmM_B"/>
    <property type="match status" value="1"/>
</dbReference>
<dbReference type="InterPro" id="IPR005844">
    <property type="entry name" value="A-D-PHexomutase_a/b/a-I"/>
</dbReference>
<dbReference type="InterPro" id="IPR016055">
    <property type="entry name" value="A-D-PHexomutase_a/b/a-I/II/III"/>
</dbReference>
<dbReference type="InterPro" id="IPR005845">
    <property type="entry name" value="A-D-PHexomutase_a/b/a-II"/>
</dbReference>
<dbReference type="InterPro" id="IPR005846">
    <property type="entry name" value="A-D-PHexomutase_a/b/a-III"/>
</dbReference>
<dbReference type="InterPro" id="IPR005843">
    <property type="entry name" value="A-D-PHexomutase_C"/>
</dbReference>
<dbReference type="InterPro" id="IPR036900">
    <property type="entry name" value="A-D-PHexomutase_C_sf"/>
</dbReference>
<dbReference type="InterPro" id="IPR005841">
    <property type="entry name" value="Alpha-D-phosphohexomutase_SF"/>
</dbReference>
<dbReference type="InterPro" id="IPR006352">
    <property type="entry name" value="GlmM_bact"/>
</dbReference>
<dbReference type="InterPro" id="IPR050060">
    <property type="entry name" value="Phosphoglucosamine_mutase"/>
</dbReference>
<dbReference type="NCBIfam" id="TIGR01455">
    <property type="entry name" value="glmM"/>
    <property type="match status" value="1"/>
</dbReference>
<dbReference type="NCBIfam" id="NF008139">
    <property type="entry name" value="PRK10887.1"/>
    <property type="match status" value="1"/>
</dbReference>
<dbReference type="PANTHER" id="PTHR42946:SF1">
    <property type="entry name" value="PHOSPHOGLUCOMUTASE (ALPHA-D-GLUCOSE-1,6-BISPHOSPHATE-DEPENDENT)"/>
    <property type="match status" value="1"/>
</dbReference>
<dbReference type="PANTHER" id="PTHR42946">
    <property type="entry name" value="PHOSPHOHEXOSE MUTASE"/>
    <property type="match status" value="1"/>
</dbReference>
<dbReference type="Pfam" id="PF02878">
    <property type="entry name" value="PGM_PMM_I"/>
    <property type="match status" value="1"/>
</dbReference>
<dbReference type="Pfam" id="PF02879">
    <property type="entry name" value="PGM_PMM_II"/>
    <property type="match status" value="1"/>
</dbReference>
<dbReference type="Pfam" id="PF02880">
    <property type="entry name" value="PGM_PMM_III"/>
    <property type="match status" value="1"/>
</dbReference>
<dbReference type="Pfam" id="PF00408">
    <property type="entry name" value="PGM_PMM_IV"/>
    <property type="match status" value="1"/>
</dbReference>
<dbReference type="PRINTS" id="PR00509">
    <property type="entry name" value="PGMPMM"/>
</dbReference>
<dbReference type="SUPFAM" id="SSF55957">
    <property type="entry name" value="Phosphoglucomutase, C-terminal domain"/>
    <property type="match status" value="1"/>
</dbReference>
<dbReference type="SUPFAM" id="SSF53738">
    <property type="entry name" value="Phosphoglucomutase, first 3 domains"/>
    <property type="match status" value="3"/>
</dbReference>
<name>GLMM_RHOPS</name>
<keyword id="KW-0413">Isomerase</keyword>
<keyword id="KW-0460">Magnesium</keyword>
<keyword id="KW-0479">Metal-binding</keyword>
<keyword id="KW-0597">Phosphoprotein</keyword>
<sequence length="450" mass="48462">MSRRYFGTDGIRGRANGLITPELALKVGQAAGLVFQRGDHRHRVVIGKDTRLSGYMIENAMVAGFTSVGMDVLLVGPMPTPAVAMLTKSMRADLGVMISASHNMFEDNGIKLFGPLGFKLSDDVEKQIELLLDESLDKKLAASASLGRARRIDGVHDRYIEFAKRTLPRDLSLDGLRVVVDCANGAAYKVVPEALWELGADVISIGVEPDGFNINKECGSTAPEALCRKVREMRADIGIALDGDADRVIMVDERGHVVDGDQLLAVIAQSWKEDGRLAKPGVVATVMSNLGLERFLAAEGIDLVRTSVGDRYVLEQMMKGGYNVGGEASGHIILSDYNTTGDGFVAALQVLAVVQKLRRPVSEVCHRFDPLPQILKNVRYRNGRPLDDAGVQSAIHAGETRLNGHGRLLIRASGTEPVIRVMGEGEDRIMVEEVVDVIVDALGSASAAAA</sequence>
<protein>
    <recommendedName>
        <fullName evidence="1">Phosphoglucosamine mutase</fullName>
        <ecNumber evidence="1">5.4.2.10</ecNumber>
    </recommendedName>
</protein>
<comment type="function">
    <text evidence="1">Catalyzes the conversion of glucosamine-6-phosphate to glucosamine-1-phosphate.</text>
</comment>
<comment type="catalytic activity">
    <reaction evidence="1">
        <text>alpha-D-glucosamine 1-phosphate = D-glucosamine 6-phosphate</text>
        <dbReference type="Rhea" id="RHEA:23424"/>
        <dbReference type="ChEBI" id="CHEBI:58516"/>
        <dbReference type="ChEBI" id="CHEBI:58725"/>
        <dbReference type="EC" id="5.4.2.10"/>
    </reaction>
</comment>
<comment type="cofactor">
    <cofactor evidence="1">
        <name>Mg(2+)</name>
        <dbReference type="ChEBI" id="CHEBI:18420"/>
    </cofactor>
    <text evidence="1">Binds 1 Mg(2+) ion per subunit.</text>
</comment>
<comment type="PTM">
    <text evidence="1">Activated by phosphorylation.</text>
</comment>
<comment type="similarity">
    <text evidence="1">Belongs to the phosphohexose mutase family.</text>
</comment>
<reference key="1">
    <citation type="submission" date="2006-03" db="EMBL/GenBank/DDBJ databases">
        <title>Complete sequence of Rhodopseudomonas palustris BisB5.</title>
        <authorList>
            <consortium name="US DOE Joint Genome Institute"/>
            <person name="Copeland A."/>
            <person name="Lucas S."/>
            <person name="Lapidus A."/>
            <person name="Barry K."/>
            <person name="Detter J.C."/>
            <person name="Glavina del Rio T."/>
            <person name="Hammon N."/>
            <person name="Israni S."/>
            <person name="Dalin E."/>
            <person name="Tice H."/>
            <person name="Pitluck S."/>
            <person name="Chain P."/>
            <person name="Malfatti S."/>
            <person name="Shin M."/>
            <person name="Vergez L."/>
            <person name="Schmutz J."/>
            <person name="Larimer F."/>
            <person name="Land M."/>
            <person name="Hauser L."/>
            <person name="Pelletier D.A."/>
            <person name="Kyrpides N."/>
            <person name="Lykidis A."/>
            <person name="Oda Y."/>
            <person name="Harwood C.S."/>
            <person name="Richardson P."/>
        </authorList>
    </citation>
    <scope>NUCLEOTIDE SEQUENCE [LARGE SCALE GENOMIC DNA]</scope>
    <source>
        <strain>BisB5</strain>
    </source>
</reference>
<organism>
    <name type="scientific">Rhodopseudomonas palustris (strain BisB5)</name>
    <dbReference type="NCBI Taxonomy" id="316057"/>
    <lineage>
        <taxon>Bacteria</taxon>
        <taxon>Pseudomonadati</taxon>
        <taxon>Pseudomonadota</taxon>
        <taxon>Alphaproteobacteria</taxon>
        <taxon>Hyphomicrobiales</taxon>
        <taxon>Nitrobacteraceae</taxon>
        <taxon>Rhodopseudomonas</taxon>
    </lineage>
</organism>
<accession>Q131V4</accession>
<evidence type="ECO:0000255" key="1">
    <source>
        <dbReference type="HAMAP-Rule" id="MF_01554"/>
    </source>
</evidence>
<proteinExistence type="inferred from homology"/>
<gene>
    <name evidence="1" type="primary">glmM</name>
    <name type="ordered locus">RPD_3914</name>
</gene>